<accession>B8MED8</accession>
<gene>
    <name type="primary">slx4</name>
    <name type="ORF">TSTA_016430</name>
</gene>
<comment type="function">
    <text evidence="1">Regulatory subunit of the slx1-slx4 structure-specific endonuclease that resolves DNA secondary structures generated during DNA repair and recombination. Has endonuclease activity towards branched DNA substrates, introducing single-strand cuts in duplex DNA close to junctions with ss-DNA.</text>
</comment>
<comment type="subunit">
    <text evidence="1">Forms a heterodimer with slx1.</text>
</comment>
<comment type="subcellular location">
    <subcellularLocation>
        <location evidence="1">Nucleus</location>
    </subcellularLocation>
</comment>
<comment type="PTM">
    <text evidence="1">Phosphorylated in response to DNA damage.</text>
</comment>
<comment type="similarity">
    <text evidence="1">Belongs to the SLX4 family.</text>
</comment>
<feature type="chain" id="PRO_0000388048" description="Structure-specific endonuclease subunit slx4">
    <location>
        <begin position="1"/>
        <end position="800"/>
    </location>
</feature>
<feature type="region of interest" description="Disordered" evidence="2">
    <location>
        <begin position="16"/>
        <end position="186"/>
    </location>
</feature>
<feature type="region of interest" description="Disordered" evidence="2">
    <location>
        <begin position="235"/>
        <end position="255"/>
    </location>
</feature>
<feature type="region of interest" description="Disordered" evidence="2">
    <location>
        <begin position="590"/>
        <end position="654"/>
    </location>
</feature>
<feature type="compositionally biased region" description="Polar residues" evidence="2">
    <location>
        <begin position="16"/>
        <end position="27"/>
    </location>
</feature>
<feature type="compositionally biased region" description="Low complexity" evidence="2">
    <location>
        <begin position="67"/>
        <end position="81"/>
    </location>
</feature>
<feature type="compositionally biased region" description="Low complexity" evidence="2">
    <location>
        <begin position="126"/>
        <end position="141"/>
    </location>
</feature>
<feature type="compositionally biased region" description="Basic and acidic residues" evidence="2">
    <location>
        <begin position="164"/>
        <end position="181"/>
    </location>
</feature>
<organism>
    <name type="scientific">Talaromyces stipitatus (strain ATCC 10500 / CBS 375.48 / QM 6759 / NRRL 1006)</name>
    <name type="common">Penicillium stipitatum</name>
    <dbReference type="NCBI Taxonomy" id="441959"/>
    <lineage>
        <taxon>Eukaryota</taxon>
        <taxon>Fungi</taxon>
        <taxon>Dikarya</taxon>
        <taxon>Ascomycota</taxon>
        <taxon>Pezizomycotina</taxon>
        <taxon>Eurotiomycetes</taxon>
        <taxon>Eurotiomycetidae</taxon>
        <taxon>Eurotiales</taxon>
        <taxon>Trichocomaceae</taxon>
        <taxon>Talaromyces</taxon>
        <taxon>Talaromyces sect. Talaromyces</taxon>
    </lineage>
</organism>
<dbReference type="EMBL" id="EQ962656">
    <property type="protein sequence ID" value="EED16565.1"/>
    <property type="molecule type" value="Genomic_DNA"/>
</dbReference>
<dbReference type="RefSeq" id="XP_002483799.1">
    <property type="nucleotide sequence ID" value="XM_002483754.1"/>
</dbReference>
<dbReference type="SMR" id="B8MED8"/>
<dbReference type="STRING" id="441959.B8MED8"/>
<dbReference type="GeneID" id="8106416"/>
<dbReference type="VEuPathDB" id="FungiDB:TSTA_016430"/>
<dbReference type="eggNOG" id="ENOG502S832">
    <property type="taxonomic scope" value="Eukaryota"/>
</dbReference>
<dbReference type="HOGENOM" id="CLU_016773_0_0_1"/>
<dbReference type="InParanoid" id="B8MED8"/>
<dbReference type="OMA" id="SICCLWK"/>
<dbReference type="OrthoDB" id="5349119at2759"/>
<dbReference type="PhylomeDB" id="B8MED8"/>
<dbReference type="Proteomes" id="UP000001745">
    <property type="component" value="Unassembled WGS sequence"/>
</dbReference>
<dbReference type="GO" id="GO:0033557">
    <property type="term" value="C:Slx1-Slx4 complex"/>
    <property type="evidence" value="ECO:0007669"/>
    <property type="project" value="UniProtKB-UniRule"/>
</dbReference>
<dbReference type="GO" id="GO:0017108">
    <property type="term" value="F:5'-flap endonuclease activity"/>
    <property type="evidence" value="ECO:0007669"/>
    <property type="project" value="InterPro"/>
</dbReference>
<dbReference type="GO" id="GO:0006310">
    <property type="term" value="P:DNA recombination"/>
    <property type="evidence" value="ECO:0007669"/>
    <property type="project" value="UniProtKB-UniRule"/>
</dbReference>
<dbReference type="GO" id="GO:0006281">
    <property type="term" value="P:DNA repair"/>
    <property type="evidence" value="ECO:0007669"/>
    <property type="project" value="UniProtKB-UniRule"/>
</dbReference>
<dbReference type="GO" id="GO:0006260">
    <property type="term" value="P:DNA replication"/>
    <property type="evidence" value="ECO:0007669"/>
    <property type="project" value="InterPro"/>
</dbReference>
<dbReference type="CDD" id="cd22999">
    <property type="entry name" value="SAP_SLX4"/>
    <property type="match status" value="1"/>
</dbReference>
<dbReference type="HAMAP" id="MF_03110">
    <property type="entry name" value="Endonuc_su_Slx4"/>
    <property type="match status" value="1"/>
</dbReference>
<dbReference type="InterPro" id="IPR027784">
    <property type="entry name" value="Slx4_ascomycetes"/>
</dbReference>
<dbReference type="InterPro" id="IPR018574">
    <property type="entry name" value="Structure-sp_endonuc_su_Slx4"/>
</dbReference>
<dbReference type="Pfam" id="PF09494">
    <property type="entry name" value="Slx4"/>
    <property type="match status" value="1"/>
</dbReference>
<sequence>MTSRLDHTIVIPSSPEQNWARSVSPCTPTRLFGLPPMSISPPSLPSPSRLFEEIGLGQQKNPPSPKSPFSSAAGKTATSKAITENPSRNESSSKRGRPGSSEAKTAGSRKNSKSQETRNKILTGRVAKPTTVSKAKATAASKSKDTSVVKAKAGTKKSKPASQNKKDKLAEEAEAEAKEVADAEGLNLEEALKRRSDWTPPKALSLVSIDEDTPSQGSGTKLSFGDVLRDYHYNRENSSCEPAQPSKEGNPTKRRRLELVEFEVLQERKPIQQKQIKDAVKTRKTKSKPKKQLNTITARVTARYEQIGELEDLFVYNEESSCETSECLKKPTKPKKETAGKQKEPEYIILSPDAATKSLNDQNFLFGTCSQLERDDSPTFFEETQTAIQLSECLTFKKTASTITTASSAMSIATRFTGKKSHWSEAARDFNGAVVQPEIIDMTDSPTVSVALSRLSEVKHDAPKMASLVSSQSVSATNSLVPKDVVTASKPAADVQLASSGPEPNKTELAAGPFRKTASRLPEMPNFNGYTDSELKNQVLSYGFSLRAVRGRKKMIELLDKCWQSKHGNTATAAIVETSSSAAINETVSVSAARHSDTQVSDKLPTRKKKTTPSRLEPKTTSRAGKKKVSEKPLAGKADKPVEKAASPIPASTYNMVDEIEDSEEEIIPSPTRIQIQRQSSSRQTTPAISCLPLGTKSKRSLKSTKSSTYDEATLLELQSSITKAIHLQTRPRRSLGGSSYSPQLTWHEKILLYEPIILEDFAAWLNTEGFALACEDREVGVALVRTWCESRGICCTFRP</sequence>
<reference key="1">
    <citation type="journal article" date="2015" name="Genome Announc.">
        <title>Genome sequence of the AIDS-associated pathogen Penicillium marneffei (ATCC18224) and its near taxonomic relative Talaromyces stipitatus (ATCC10500).</title>
        <authorList>
            <person name="Nierman W.C."/>
            <person name="Fedorova-Abrams N.D."/>
            <person name="Andrianopoulos A."/>
        </authorList>
    </citation>
    <scope>NUCLEOTIDE SEQUENCE [LARGE SCALE GENOMIC DNA]</scope>
    <source>
        <strain>ATCC 10500 / CBS 375.48 / QM 6759 / NRRL 1006</strain>
    </source>
</reference>
<evidence type="ECO:0000255" key="1">
    <source>
        <dbReference type="HAMAP-Rule" id="MF_03110"/>
    </source>
</evidence>
<evidence type="ECO:0000256" key="2">
    <source>
        <dbReference type="SAM" id="MobiDB-lite"/>
    </source>
</evidence>
<proteinExistence type="inferred from homology"/>
<keyword id="KW-0227">DNA damage</keyword>
<keyword id="KW-0233">DNA recombination</keyword>
<keyword id="KW-0234">DNA repair</keyword>
<keyword id="KW-0539">Nucleus</keyword>
<keyword id="KW-0597">Phosphoprotein</keyword>
<keyword id="KW-1185">Reference proteome</keyword>
<protein>
    <recommendedName>
        <fullName evidence="1">Structure-specific endonuclease subunit slx4</fullName>
    </recommendedName>
</protein>
<name>SLX4_TALSN</name>